<feature type="chain" id="PRO_1000215293" description="tRNA N6-adenosine threonylcarbamoyltransferase">
    <location>
        <begin position="1"/>
        <end position="341"/>
    </location>
</feature>
<feature type="binding site" evidence="1">
    <location>
        <position position="111"/>
    </location>
    <ligand>
        <name>Fe cation</name>
        <dbReference type="ChEBI" id="CHEBI:24875"/>
    </ligand>
</feature>
<feature type="binding site" evidence="1">
    <location>
        <position position="115"/>
    </location>
    <ligand>
        <name>Fe cation</name>
        <dbReference type="ChEBI" id="CHEBI:24875"/>
    </ligand>
</feature>
<feature type="binding site" evidence="1">
    <location>
        <begin position="134"/>
        <end position="138"/>
    </location>
    <ligand>
        <name>substrate</name>
    </ligand>
</feature>
<feature type="binding site" evidence="1">
    <location>
        <position position="167"/>
    </location>
    <ligand>
        <name>substrate</name>
    </ligand>
</feature>
<feature type="binding site" evidence="1">
    <location>
        <position position="180"/>
    </location>
    <ligand>
        <name>substrate</name>
    </ligand>
</feature>
<feature type="binding site" evidence="1">
    <location>
        <position position="276"/>
    </location>
    <ligand>
        <name>substrate</name>
    </ligand>
</feature>
<feature type="binding site" evidence="1">
    <location>
        <position position="304"/>
    </location>
    <ligand>
        <name>Fe cation</name>
        <dbReference type="ChEBI" id="CHEBI:24875"/>
    </ligand>
</feature>
<gene>
    <name evidence="1" type="primary">tsaD</name>
    <name type="synonym">gcp</name>
    <name type="ordered locus">Avin_46970</name>
</gene>
<name>TSAD_AZOVD</name>
<protein>
    <recommendedName>
        <fullName evidence="1">tRNA N6-adenosine threonylcarbamoyltransferase</fullName>
        <ecNumber evidence="1">2.3.1.234</ecNumber>
    </recommendedName>
    <alternativeName>
        <fullName evidence="1">N6-L-threonylcarbamoyladenine synthase</fullName>
        <shortName evidence="1">t(6)A synthase</shortName>
    </alternativeName>
    <alternativeName>
        <fullName evidence="1">t(6)A37 threonylcarbamoyladenosine biosynthesis protein TsaD</fullName>
    </alternativeName>
    <alternativeName>
        <fullName evidence="1">tRNA threonylcarbamoyladenosine biosynthesis protein TsaD</fullName>
    </alternativeName>
</protein>
<dbReference type="EC" id="2.3.1.234" evidence="1"/>
<dbReference type="EMBL" id="CP001157">
    <property type="protein sequence ID" value="ACO80802.1"/>
    <property type="molecule type" value="Genomic_DNA"/>
</dbReference>
<dbReference type="RefSeq" id="WP_012703165.1">
    <property type="nucleotide sequence ID" value="NC_012560.1"/>
</dbReference>
<dbReference type="SMR" id="C1DIY3"/>
<dbReference type="STRING" id="322710.Avin_46970"/>
<dbReference type="EnsemblBacteria" id="ACO80802">
    <property type="protein sequence ID" value="ACO80802"/>
    <property type="gene ID" value="Avin_46970"/>
</dbReference>
<dbReference type="GeneID" id="88187572"/>
<dbReference type="KEGG" id="avn:Avin_46970"/>
<dbReference type="eggNOG" id="COG0533">
    <property type="taxonomic scope" value="Bacteria"/>
</dbReference>
<dbReference type="HOGENOM" id="CLU_023208_0_2_6"/>
<dbReference type="OrthoDB" id="9806197at2"/>
<dbReference type="Proteomes" id="UP000002424">
    <property type="component" value="Chromosome"/>
</dbReference>
<dbReference type="GO" id="GO:0005737">
    <property type="term" value="C:cytoplasm"/>
    <property type="evidence" value="ECO:0007669"/>
    <property type="project" value="UniProtKB-SubCell"/>
</dbReference>
<dbReference type="GO" id="GO:0005506">
    <property type="term" value="F:iron ion binding"/>
    <property type="evidence" value="ECO:0007669"/>
    <property type="project" value="UniProtKB-UniRule"/>
</dbReference>
<dbReference type="GO" id="GO:0061711">
    <property type="term" value="F:N(6)-L-threonylcarbamoyladenine synthase activity"/>
    <property type="evidence" value="ECO:0007669"/>
    <property type="project" value="UniProtKB-EC"/>
</dbReference>
<dbReference type="GO" id="GO:0002949">
    <property type="term" value="P:tRNA threonylcarbamoyladenosine modification"/>
    <property type="evidence" value="ECO:0007669"/>
    <property type="project" value="UniProtKB-UniRule"/>
</dbReference>
<dbReference type="CDD" id="cd24133">
    <property type="entry name" value="ASKHA_NBD_TsaD_bac"/>
    <property type="match status" value="1"/>
</dbReference>
<dbReference type="FunFam" id="3.30.420.40:FF:000012">
    <property type="entry name" value="tRNA N6-adenosine threonylcarbamoyltransferase"/>
    <property type="match status" value="1"/>
</dbReference>
<dbReference type="FunFam" id="3.30.420.40:FF:000031">
    <property type="entry name" value="tRNA N6-adenosine threonylcarbamoyltransferase"/>
    <property type="match status" value="1"/>
</dbReference>
<dbReference type="Gene3D" id="3.30.420.40">
    <property type="match status" value="2"/>
</dbReference>
<dbReference type="HAMAP" id="MF_01445">
    <property type="entry name" value="TsaD"/>
    <property type="match status" value="1"/>
</dbReference>
<dbReference type="InterPro" id="IPR043129">
    <property type="entry name" value="ATPase_NBD"/>
</dbReference>
<dbReference type="InterPro" id="IPR000905">
    <property type="entry name" value="Gcp-like_dom"/>
</dbReference>
<dbReference type="InterPro" id="IPR017861">
    <property type="entry name" value="KAE1/TsaD"/>
</dbReference>
<dbReference type="InterPro" id="IPR022450">
    <property type="entry name" value="TsaD"/>
</dbReference>
<dbReference type="NCBIfam" id="TIGR00329">
    <property type="entry name" value="gcp_kae1"/>
    <property type="match status" value="1"/>
</dbReference>
<dbReference type="NCBIfam" id="TIGR03723">
    <property type="entry name" value="T6A_TsaD_YgjD"/>
    <property type="match status" value="1"/>
</dbReference>
<dbReference type="PANTHER" id="PTHR11735">
    <property type="entry name" value="TRNA N6-ADENOSINE THREONYLCARBAMOYLTRANSFERASE"/>
    <property type="match status" value="1"/>
</dbReference>
<dbReference type="PANTHER" id="PTHR11735:SF6">
    <property type="entry name" value="TRNA N6-ADENOSINE THREONYLCARBAMOYLTRANSFERASE, MITOCHONDRIAL"/>
    <property type="match status" value="1"/>
</dbReference>
<dbReference type="Pfam" id="PF00814">
    <property type="entry name" value="TsaD"/>
    <property type="match status" value="1"/>
</dbReference>
<dbReference type="PRINTS" id="PR00789">
    <property type="entry name" value="OSIALOPTASE"/>
</dbReference>
<dbReference type="SUPFAM" id="SSF53067">
    <property type="entry name" value="Actin-like ATPase domain"/>
    <property type="match status" value="2"/>
</dbReference>
<sequence length="341" mass="36677">MLVLGLETSCDETGVALYDSRRGLLADALFSQIDLHRIYGGVVPELASRDHVKRMLPLLRQVLDESGCRTGDIDGIAYTAGPGLVGALLVGASCAQALALAWGVPALGVHHMEGHLLAPMLEEQPPQFPFVALLVSGGHTQLVRVDGIGRYQVLGESLDDAAGEAFDKTAKLLGLGYPGGPEIARLAQDGRPGRFVFPRPMTDRPGLEFSFSGLKTFALNTWQHCRASGDDGEQSRRDIALAFQQAVVETLIIKCRRALKQTGLKRLVIAGGVSANQALRSALERMLGELDGQVFYARPRFCTDNGAMIAYAGCQRLLAGQRDGPAIQVHARWPMETLPAL</sequence>
<organism>
    <name type="scientific">Azotobacter vinelandii (strain DJ / ATCC BAA-1303)</name>
    <dbReference type="NCBI Taxonomy" id="322710"/>
    <lineage>
        <taxon>Bacteria</taxon>
        <taxon>Pseudomonadati</taxon>
        <taxon>Pseudomonadota</taxon>
        <taxon>Gammaproteobacteria</taxon>
        <taxon>Pseudomonadales</taxon>
        <taxon>Pseudomonadaceae</taxon>
        <taxon>Azotobacter</taxon>
    </lineage>
</organism>
<comment type="function">
    <text evidence="1">Required for the formation of a threonylcarbamoyl group on adenosine at position 37 (t(6)A37) in tRNAs that read codons beginning with adenine. Is involved in the transfer of the threonylcarbamoyl moiety of threonylcarbamoyl-AMP (TC-AMP) to the N6 group of A37, together with TsaE and TsaB. TsaD likely plays a direct catalytic role in this reaction.</text>
</comment>
<comment type="catalytic activity">
    <reaction evidence="1">
        <text>L-threonylcarbamoyladenylate + adenosine(37) in tRNA = N(6)-L-threonylcarbamoyladenosine(37) in tRNA + AMP + H(+)</text>
        <dbReference type="Rhea" id="RHEA:37059"/>
        <dbReference type="Rhea" id="RHEA-COMP:10162"/>
        <dbReference type="Rhea" id="RHEA-COMP:10163"/>
        <dbReference type="ChEBI" id="CHEBI:15378"/>
        <dbReference type="ChEBI" id="CHEBI:73682"/>
        <dbReference type="ChEBI" id="CHEBI:74411"/>
        <dbReference type="ChEBI" id="CHEBI:74418"/>
        <dbReference type="ChEBI" id="CHEBI:456215"/>
        <dbReference type="EC" id="2.3.1.234"/>
    </reaction>
</comment>
<comment type="cofactor">
    <cofactor evidence="1">
        <name>Fe(2+)</name>
        <dbReference type="ChEBI" id="CHEBI:29033"/>
    </cofactor>
    <text evidence="1">Binds 1 Fe(2+) ion per subunit.</text>
</comment>
<comment type="subcellular location">
    <subcellularLocation>
        <location evidence="1">Cytoplasm</location>
    </subcellularLocation>
</comment>
<comment type="similarity">
    <text evidence="1">Belongs to the KAE1 / TsaD family.</text>
</comment>
<proteinExistence type="inferred from homology"/>
<evidence type="ECO:0000255" key="1">
    <source>
        <dbReference type="HAMAP-Rule" id="MF_01445"/>
    </source>
</evidence>
<keyword id="KW-0012">Acyltransferase</keyword>
<keyword id="KW-0963">Cytoplasm</keyword>
<keyword id="KW-0408">Iron</keyword>
<keyword id="KW-0479">Metal-binding</keyword>
<keyword id="KW-0808">Transferase</keyword>
<keyword id="KW-0819">tRNA processing</keyword>
<accession>C1DIY3</accession>
<reference key="1">
    <citation type="journal article" date="2009" name="J. Bacteriol.">
        <title>Genome sequence of Azotobacter vinelandii, an obligate aerobe specialized to support diverse anaerobic metabolic processes.</title>
        <authorList>
            <person name="Setubal J.C."/>
            <person name="Dos Santos P."/>
            <person name="Goldman B.S."/>
            <person name="Ertesvaag H."/>
            <person name="Espin G."/>
            <person name="Rubio L.M."/>
            <person name="Valla S."/>
            <person name="Almeida N.F."/>
            <person name="Balasubramanian D."/>
            <person name="Cromes L."/>
            <person name="Curatti L."/>
            <person name="Du Z."/>
            <person name="Godsy E."/>
            <person name="Goodner B."/>
            <person name="Hellner-Burris K."/>
            <person name="Hernandez J.A."/>
            <person name="Houmiel K."/>
            <person name="Imperial J."/>
            <person name="Kennedy C."/>
            <person name="Larson T.J."/>
            <person name="Latreille P."/>
            <person name="Ligon L.S."/>
            <person name="Lu J."/>
            <person name="Maerk M."/>
            <person name="Miller N.M."/>
            <person name="Norton S."/>
            <person name="O'Carroll I.P."/>
            <person name="Paulsen I."/>
            <person name="Raulfs E.C."/>
            <person name="Roemer R."/>
            <person name="Rosser J."/>
            <person name="Segura D."/>
            <person name="Slater S."/>
            <person name="Stricklin S.L."/>
            <person name="Studholme D.J."/>
            <person name="Sun J."/>
            <person name="Viana C.J."/>
            <person name="Wallin E."/>
            <person name="Wang B."/>
            <person name="Wheeler C."/>
            <person name="Zhu H."/>
            <person name="Dean D.R."/>
            <person name="Dixon R."/>
            <person name="Wood D."/>
        </authorList>
    </citation>
    <scope>NUCLEOTIDE SEQUENCE [LARGE SCALE GENOMIC DNA]</scope>
    <source>
        <strain>DJ / ATCC BAA-1303</strain>
    </source>
</reference>